<accession>P29935</accession>
<sequence>MSASGLPFDDFRELLRNLPGPDAAALVAARERDAQLTKPPGALGRLEEIAFWLAAWTGKAPVVNRPLVAIFAGNHGVTRQGVTPFPSSVTAQMVENFAAGGAAINQICVSHDLGLKVFDLALEYPTGDITEEAALSERDCAATMAFGMEAIAGGTDLLCIGEMGIGNTTIAAAINLGLYGGTAEEWVGPGTGSEGEVLKRKIAAVEKAVALHRDHLSDPLELMRRLGGREIAAMAGAILAARVQKVPVIIDGYVATAAASILKAANPSALDHCLIGHVSGEPGHLRAIEKLGKTPLLALGMRLGEGTGAALAAGIVKAAAACHSGMATFAQAGVSNKE</sequence>
<organism>
    <name type="scientific">Sinorhizobium sp</name>
    <dbReference type="NCBI Taxonomy" id="42445"/>
    <lineage>
        <taxon>Bacteria</taxon>
        <taxon>Pseudomonadati</taxon>
        <taxon>Pseudomonadota</taxon>
        <taxon>Alphaproteobacteria</taxon>
        <taxon>Hyphomicrobiales</taxon>
        <taxon>Rhizobiaceae</taxon>
        <taxon>Sinorhizobium/Ensifer group</taxon>
        <taxon>Sinorhizobium</taxon>
    </lineage>
</organism>
<protein>
    <recommendedName>
        <fullName>Nicotinate-nucleotide--dimethylbenzimidazole phosphoribosyltransferase</fullName>
        <shortName>NN:DBI PRT</shortName>
        <ecNumber>2.4.2.21</ecNumber>
    </recommendedName>
    <alternativeName>
        <fullName>N(1)-alpha-phosphoribosyltransferase</fullName>
    </alternativeName>
</protein>
<reference key="1">
    <citation type="journal article" date="1991" name="J. Bacteriol.">
        <title>Genetic analysis, nucleotide sequence, and products of two Pseudomonas denitrificans cob genes encoding nicotinate-nucleotide: dimethylbenzimidazole phosphoribosyltransferase and cobalamin (5'-phosphate) synthase.</title>
        <authorList>
            <person name="Cameron B."/>
            <person name="Blanche F."/>
            <person name="Rouyez M.-C."/>
            <person name="Bisch D."/>
            <person name="Famechon A."/>
            <person name="Couder M."/>
            <person name="Cauchois L."/>
            <person name="Thibaut D."/>
            <person name="Debussche L."/>
            <person name="Crouzet J."/>
        </authorList>
    </citation>
    <scope>NUCLEOTIDE SEQUENCE [GENOMIC DNA]</scope>
    <scope>PROTEIN SEQUENCE OF 2-16</scope>
    <source>
        <strain>SC510</strain>
    </source>
</reference>
<comment type="function">
    <text>Catalyzes the synthesis of alpha-ribazole-5'-phosphate from nicotinate mononucleotide (NAMN) and 5,6-dimethylbenzimidazole (DMB).</text>
</comment>
<comment type="catalytic activity">
    <reaction>
        <text>5,6-dimethylbenzimidazole + nicotinate beta-D-ribonucleotide = alpha-ribazole 5'-phosphate + nicotinate + H(+)</text>
        <dbReference type="Rhea" id="RHEA:11196"/>
        <dbReference type="ChEBI" id="CHEBI:15378"/>
        <dbReference type="ChEBI" id="CHEBI:15890"/>
        <dbReference type="ChEBI" id="CHEBI:32544"/>
        <dbReference type="ChEBI" id="CHEBI:57502"/>
        <dbReference type="ChEBI" id="CHEBI:57918"/>
        <dbReference type="EC" id="2.4.2.21"/>
    </reaction>
</comment>
<comment type="pathway">
    <text>Nucleoside biosynthesis; alpha-ribazole biosynthesis; alpha-ribazole from 5,6-dimethylbenzimidazole: step 1/2.</text>
</comment>
<comment type="subunit">
    <text>Homodimer.</text>
</comment>
<comment type="similarity">
    <text evidence="3">Belongs to the CobT family.</text>
</comment>
<comment type="caution">
    <text evidence="3">Was originally thought to originate from Pseudomonas denitrificans, but similarity searches show that the sequence is much closer to Sinorhizobium. The entry's taxonomy has been changed.</text>
</comment>
<gene>
    <name type="primary">cobU</name>
</gene>
<keyword id="KW-0169">Cobalamin biosynthesis</keyword>
<keyword id="KW-0903">Direct protein sequencing</keyword>
<keyword id="KW-0328">Glycosyltransferase</keyword>
<keyword id="KW-0808">Transferase</keyword>
<proteinExistence type="evidence at protein level"/>
<evidence type="ECO:0000250" key="1"/>
<evidence type="ECO:0000269" key="2">
    <source>
    </source>
</evidence>
<evidence type="ECO:0000305" key="3"/>
<dbReference type="EC" id="2.4.2.21"/>
<dbReference type="EMBL" id="M62868">
    <property type="protein sequence ID" value="AAA25788.1"/>
    <property type="molecule type" value="Genomic_DNA"/>
</dbReference>
<dbReference type="SMR" id="P29935"/>
<dbReference type="KEGG" id="ag:AAA25788"/>
<dbReference type="BioCyc" id="MetaCyc:MONOMER-13241"/>
<dbReference type="SABIO-RK" id="P29935"/>
<dbReference type="UniPathway" id="UPA00061">
    <property type="reaction ID" value="UER00516"/>
</dbReference>
<dbReference type="GO" id="GO:0008939">
    <property type="term" value="F:nicotinate-nucleotide-dimethylbenzimidazole phosphoribosyltransferase activity"/>
    <property type="evidence" value="ECO:0007669"/>
    <property type="project" value="UniProtKB-UniRule"/>
</dbReference>
<dbReference type="GO" id="GO:0009236">
    <property type="term" value="P:cobalamin biosynthetic process"/>
    <property type="evidence" value="ECO:0007669"/>
    <property type="project" value="UniProtKB-KW"/>
</dbReference>
<dbReference type="CDD" id="cd02439">
    <property type="entry name" value="DMB-PRT_CobT"/>
    <property type="match status" value="1"/>
</dbReference>
<dbReference type="Gene3D" id="1.10.1610.10">
    <property type="match status" value="1"/>
</dbReference>
<dbReference type="Gene3D" id="3.40.50.10210">
    <property type="match status" value="1"/>
</dbReference>
<dbReference type="HAMAP" id="MF_00230">
    <property type="entry name" value="CobT"/>
    <property type="match status" value="1"/>
</dbReference>
<dbReference type="InterPro" id="IPR003200">
    <property type="entry name" value="Nict_dMeBzImd_PRibTrfase"/>
</dbReference>
<dbReference type="InterPro" id="IPR017846">
    <property type="entry name" value="Nict_dMeBzImd_PRibTrfase_bact"/>
</dbReference>
<dbReference type="InterPro" id="IPR023195">
    <property type="entry name" value="Nict_dMeBzImd_PRibTrfase_N"/>
</dbReference>
<dbReference type="InterPro" id="IPR036087">
    <property type="entry name" value="Nict_dMeBzImd_PRibTrfase_sf"/>
</dbReference>
<dbReference type="NCBIfam" id="TIGR03160">
    <property type="entry name" value="cobT_DBIPRT"/>
    <property type="match status" value="1"/>
</dbReference>
<dbReference type="NCBIfam" id="NF000996">
    <property type="entry name" value="PRK00105.1"/>
    <property type="match status" value="1"/>
</dbReference>
<dbReference type="PANTHER" id="PTHR43463">
    <property type="entry name" value="NICOTINATE-NUCLEOTIDE--DIMETHYLBENZIMIDAZOLE PHOSPHORIBOSYLTRANSFERASE"/>
    <property type="match status" value="1"/>
</dbReference>
<dbReference type="PANTHER" id="PTHR43463:SF1">
    <property type="entry name" value="NICOTINATE-NUCLEOTIDE--DIMETHYLBENZIMIDAZOLE PHOSPHORIBOSYLTRANSFERASE"/>
    <property type="match status" value="1"/>
</dbReference>
<dbReference type="Pfam" id="PF02277">
    <property type="entry name" value="DBI_PRT"/>
    <property type="match status" value="1"/>
</dbReference>
<dbReference type="SUPFAM" id="SSF52733">
    <property type="entry name" value="Nicotinate mononucleotide:5,6-dimethylbenzimidazole phosphoribosyltransferase (CobT)"/>
    <property type="match status" value="1"/>
</dbReference>
<name>COBU_SINSX</name>
<feature type="initiator methionine" description="Removed" evidence="2">
    <location>
        <position position="1"/>
    </location>
</feature>
<feature type="chain" id="PRO_0000167061" description="Nicotinate-nucleotide--dimethylbenzimidazole phosphoribosyltransferase">
    <location>
        <begin position="2"/>
        <end position="338"/>
    </location>
</feature>
<feature type="active site" description="Proton acceptor" evidence="1">
    <location>
        <position position="305"/>
    </location>
</feature>